<feature type="chain" id="PRO_1000014290" description="Small ribosomal subunit protein uS7">
    <location>
        <begin position="1"/>
        <end position="156"/>
    </location>
</feature>
<keyword id="KW-0687">Ribonucleoprotein</keyword>
<keyword id="KW-0689">Ribosomal protein</keyword>
<keyword id="KW-0694">RNA-binding</keyword>
<keyword id="KW-0699">rRNA-binding</keyword>
<keyword id="KW-0820">tRNA-binding</keyword>
<protein>
    <recommendedName>
        <fullName evidence="1">Small ribosomal subunit protein uS7</fullName>
    </recommendedName>
    <alternativeName>
        <fullName evidence="2">30S ribosomal protein S7</fullName>
    </alternativeName>
</protein>
<accession>A1REB0</accession>
<name>RS7_SHESW</name>
<gene>
    <name evidence="1" type="primary">rpsG</name>
    <name type="ordered locus">Sputw3181_0152</name>
</gene>
<evidence type="ECO:0000255" key="1">
    <source>
        <dbReference type="HAMAP-Rule" id="MF_00480"/>
    </source>
</evidence>
<evidence type="ECO:0000305" key="2"/>
<comment type="function">
    <text evidence="1">One of the primary rRNA binding proteins, it binds directly to 16S rRNA where it nucleates assembly of the head domain of the 30S subunit. Is located at the subunit interface close to the decoding center, probably blocks exit of the E-site tRNA.</text>
</comment>
<comment type="subunit">
    <text evidence="1">Part of the 30S ribosomal subunit. Contacts proteins S9 and S11.</text>
</comment>
<comment type="similarity">
    <text evidence="1">Belongs to the universal ribosomal protein uS7 family.</text>
</comment>
<proteinExistence type="inferred from homology"/>
<reference key="1">
    <citation type="submission" date="2006-12" db="EMBL/GenBank/DDBJ databases">
        <title>Complete sequence of Shewanella sp. W3-18-1.</title>
        <authorList>
            <consortium name="US DOE Joint Genome Institute"/>
            <person name="Copeland A."/>
            <person name="Lucas S."/>
            <person name="Lapidus A."/>
            <person name="Barry K."/>
            <person name="Detter J.C."/>
            <person name="Glavina del Rio T."/>
            <person name="Hammon N."/>
            <person name="Israni S."/>
            <person name="Dalin E."/>
            <person name="Tice H."/>
            <person name="Pitluck S."/>
            <person name="Chain P."/>
            <person name="Malfatti S."/>
            <person name="Shin M."/>
            <person name="Vergez L."/>
            <person name="Schmutz J."/>
            <person name="Larimer F."/>
            <person name="Land M."/>
            <person name="Hauser L."/>
            <person name="Kyrpides N."/>
            <person name="Lykidis A."/>
            <person name="Tiedje J."/>
            <person name="Richardson P."/>
        </authorList>
    </citation>
    <scope>NUCLEOTIDE SEQUENCE [LARGE SCALE GENOMIC DNA]</scope>
    <source>
        <strain>W3-18-1</strain>
    </source>
</reference>
<dbReference type="EMBL" id="CP000503">
    <property type="protein sequence ID" value="ABM23005.1"/>
    <property type="molecule type" value="Genomic_DNA"/>
</dbReference>
<dbReference type="RefSeq" id="WP_011787570.1">
    <property type="nucleotide sequence ID" value="NC_008750.1"/>
</dbReference>
<dbReference type="SMR" id="A1REB0"/>
<dbReference type="GeneID" id="67441756"/>
<dbReference type="KEGG" id="shw:Sputw3181_0152"/>
<dbReference type="HOGENOM" id="CLU_072226_1_1_6"/>
<dbReference type="Proteomes" id="UP000002597">
    <property type="component" value="Chromosome"/>
</dbReference>
<dbReference type="GO" id="GO:0015935">
    <property type="term" value="C:small ribosomal subunit"/>
    <property type="evidence" value="ECO:0007669"/>
    <property type="project" value="InterPro"/>
</dbReference>
<dbReference type="GO" id="GO:0019843">
    <property type="term" value="F:rRNA binding"/>
    <property type="evidence" value="ECO:0007669"/>
    <property type="project" value="UniProtKB-UniRule"/>
</dbReference>
<dbReference type="GO" id="GO:0003735">
    <property type="term" value="F:structural constituent of ribosome"/>
    <property type="evidence" value="ECO:0007669"/>
    <property type="project" value="InterPro"/>
</dbReference>
<dbReference type="GO" id="GO:0000049">
    <property type="term" value="F:tRNA binding"/>
    <property type="evidence" value="ECO:0007669"/>
    <property type="project" value="UniProtKB-UniRule"/>
</dbReference>
<dbReference type="GO" id="GO:0006412">
    <property type="term" value="P:translation"/>
    <property type="evidence" value="ECO:0007669"/>
    <property type="project" value="UniProtKB-UniRule"/>
</dbReference>
<dbReference type="CDD" id="cd14869">
    <property type="entry name" value="uS7_Bacteria"/>
    <property type="match status" value="1"/>
</dbReference>
<dbReference type="FunFam" id="1.10.455.10:FF:000001">
    <property type="entry name" value="30S ribosomal protein S7"/>
    <property type="match status" value="1"/>
</dbReference>
<dbReference type="Gene3D" id="1.10.455.10">
    <property type="entry name" value="Ribosomal protein S7 domain"/>
    <property type="match status" value="1"/>
</dbReference>
<dbReference type="HAMAP" id="MF_00480_B">
    <property type="entry name" value="Ribosomal_uS7_B"/>
    <property type="match status" value="1"/>
</dbReference>
<dbReference type="InterPro" id="IPR000235">
    <property type="entry name" value="Ribosomal_uS7"/>
</dbReference>
<dbReference type="InterPro" id="IPR005717">
    <property type="entry name" value="Ribosomal_uS7_bac/org-type"/>
</dbReference>
<dbReference type="InterPro" id="IPR020606">
    <property type="entry name" value="Ribosomal_uS7_CS"/>
</dbReference>
<dbReference type="InterPro" id="IPR023798">
    <property type="entry name" value="Ribosomal_uS7_dom"/>
</dbReference>
<dbReference type="InterPro" id="IPR036823">
    <property type="entry name" value="Ribosomal_uS7_dom_sf"/>
</dbReference>
<dbReference type="NCBIfam" id="TIGR01029">
    <property type="entry name" value="rpsG_bact"/>
    <property type="match status" value="1"/>
</dbReference>
<dbReference type="PANTHER" id="PTHR11205">
    <property type="entry name" value="RIBOSOMAL PROTEIN S7"/>
    <property type="match status" value="1"/>
</dbReference>
<dbReference type="Pfam" id="PF00177">
    <property type="entry name" value="Ribosomal_S7"/>
    <property type="match status" value="1"/>
</dbReference>
<dbReference type="PIRSF" id="PIRSF002122">
    <property type="entry name" value="RPS7p_RPS7a_RPS5e_RPS7o"/>
    <property type="match status" value="1"/>
</dbReference>
<dbReference type="SUPFAM" id="SSF47973">
    <property type="entry name" value="Ribosomal protein S7"/>
    <property type="match status" value="1"/>
</dbReference>
<dbReference type="PROSITE" id="PS00052">
    <property type="entry name" value="RIBOSOMAL_S7"/>
    <property type="match status" value="1"/>
</dbReference>
<sequence length="156" mass="17789">MPRRRVVGQRKILPDPKFHSELLAKFINVIMQDGKKSTAEKIIYKALDVVAEKKSENHLVILEAALDNVRPSVEVKSRRVGGSTYQVPCEVRPVRRNALAMRWLVEAARKRGEKSMALRLAGEMLDASENKGTAVKKREDVHRMAEANKAFAHYRW</sequence>
<organism>
    <name type="scientific">Shewanella sp. (strain W3-18-1)</name>
    <dbReference type="NCBI Taxonomy" id="351745"/>
    <lineage>
        <taxon>Bacteria</taxon>
        <taxon>Pseudomonadati</taxon>
        <taxon>Pseudomonadota</taxon>
        <taxon>Gammaproteobacteria</taxon>
        <taxon>Alteromonadales</taxon>
        <taxon>Shewanellaceae</taxon>
        <taxon>Shewanella</taxon>
    </lineage>
</organism>